<name>P2C61_ORYSJ</name>
<dbReference type="EC" id="3.1.3.16"/>
<dbReference type="EMBL" id="AP005244">
    <property type="protein sequence ID" value="BAC80094.1"/>
    <property type="molecule type" value="Genomic_DNA"/>
</dbReference>
<dbReference type="EMBL" id="AP008213">
    <property type="protein sequence ID" value="BAF20664.1"/>
    <property type="molecule type" value="Genomic_DNA"/>
</dbReference>
<dbReference type="EMBL" id="AP014963">
    <property type="protein sequence ID" value="BAS99790.1"/>
    <property type="molecule type" value="Genomic_DNA"/>
</dbReference>
<dbReference type="EMBL" id="CM000144">
    <property type="protein sequence ID" value="EAZ38477.1"/>
    <property type="status" value="ALT_INIT"/>
    <property type="molecule type" value="Genomic_DNA"/>
</dbReference>
<dbReference type="EMBL" id="AK102668">
    <property type="protein sequence ID" value="BAG95663.1"/>
    <property type="molecule type" value="mRNA"/>
</dbReference>
<dbReference type="RefSeq" id="XP_015645453.1">
    <property type="nucleotide sequence ID" value="XM_015789967.1"/>
</dbReference>
<dbReference type="SMR" id="Q7XHN8"/>
<dbReference type="FunCoup" id="Q7XHN8">
    <property type="interactions" value="1009"/>
</dbReference>
<dbReference type="STRING" id="39947.Q7XHN8"/>
<dbReference type="PaxDb" id="39947-Q7XHN8"/>
<dbReference type="EnsemblPlants" id="Os07t0114000-01">
    <property type="protein sequence ID" value="Os07t0114000-01"/>
    <property type="gene ID" value="Os07g0114000"/>
</dbReference>
<dbReference type="Gramene" id="Os07t0114000-01">
    <property type="protein sequence ID" value="Os07t0114000-01"/>
    <property type="gene ID" value="Os07g0114000"/>
</dbReference>
<dbReference type="KEGG" id="dosa:Os07g0114000"/>
<dbReference type="eggNOG" id="KOG0700">
    <property type="taxonomic scope" value="Eukaryota"/>
</dbReference>
<dbReference type="HOGENOM" id="CLU_013173_2_2_1"/>
<dbReference type="InParanoid" id="Q7XHN8"/>
<dbReference type="OMA" id="YGICKER"/>
<dbReference type="OrthoDB" id="420076at2759"/>
<dbReference type="Proteomes" id="UP000000763">
    <property type="component" value="Chromosome 7"/>
</dbReference>
<dbReference type="Proteomes" id="UP000007752">
    <property type="component" value="Chromosome 7"/>
</dbReference>
<dbReference type="Proteomes" id="UP000059680">
    <property type="component" value="Chromosome 7"/>
</dbReference>
<dbReference type="GO" id="GO:0046872">
    <property type="term" value="F:metal ion binding"/>
    <property type="evidence" value="ECO:0007669"/>
    <property type="project" value="UniProtKB-KW"/>
</dbReference>
<dbReference type="GO" id="GO:0004722">
    <property type="term" value="F:protein serine/threonine phosphatase activity"/>
    <property type="evidence" value="ECO:0000318"/>
    <property type="project" value="GO_Central"/>
</dbReference>
<dbReference type="GO" id="GO:1902531">
    <property type="term" value="P:regulation of intracellular signal transduction"/>
    <property type="evidence" value="ECO:0000318"/>
    <property type="project" value="GO_Central"/>
</dbReference>
<dbReference type="CDD" id="cd00143">
    <property type="entry name" value="PP2Cc"/>
    <property type="match status" value="1"/>
</dbReference>
<dbReference type="FunFam" id="3.60.40.10:FF:000052">
    <property type="entry name" value="Probable protein phosphatase 2C 34"/>
    <property type="match status" value="1"/>
</dbReference>
<dbReference type="Gene3D" id="3.60.40.10">
    <property type="entry name" value="PPM-type phosphatase domain"/>
    <property type="match status" value="1"/>
</dbReference>
<dbReference type="InterPro" id="IPR015655">
    <property type="entry name" value="PP2C"/>
</dbReference>
<dbReference type="InterPro" id="IPR000222">
    <property type="entry name" value="PP2C_BS"/>
</dbReference>
<dbReference type="InterPro" id="IPR036457">
    <property type="entry name" value="PPM-type-like_dom_sf"/>
</dbReference>
<dbReference type="InterPro" id="IPR001932">
    <property type="entry name" value="PPM-type_phosphatase-like_dom"/>
</dbReference>
<dbReference type="PANTHER" id="PTHR47992">
    <property type="entry name" value="PROTEIN PHOSPHATASE"/>
    <property type="match status" value="1"/>
</dbReference>
<dbReference type="Pfam" id="PF00481">
    <property type="entry name" value="PP2C"/>
    <property type="match status" value="1"/>
</dbReference>
<dbReference type="SMART" id="SM00332">
    <property type="entry name" value="PP2Cc"/>
    <property type="match status" value="1"/>
</dbReference>
<dbReference type="SUPFAM" id="SSF81606">
    <property type="entry name" value="PP2C-like"/>
    <property type="match status" value="1"/>
</dbReference>
<dbReference type="PROSITE" id="PS01032">
    <property type="entry name" value="PPM_1"/>
    <property type="match status" value="1"/>
</dbReference>
<dbReference type="PROSITE" id="PS51746">
    <property type="entry name" value="PPM_2"/>
    <property type="match status" value="1"/>
</dbReference>
<keyword id="KW-0378">Hydrolase</keyword>
<keyword id="KW-0460">Magnesium</keyword>
<keyword id="KW-0464">Manganese</keyword>
<keyword id="KW-0479">Metal-binding</keyword>
<keyword id="KW-0904">Protein phosphatase</keyword>
<keyword id="KW-1185">Reference proteome</keyword>
<gene>
    <name type="ordered locus">Os07g0114000</name>
    <name type="ordered locus">LOC_Os07g02330</name>
    <name type="ORF">OJ1513_F02.129</name>
    <name type="ORF">OsJ_021960</name>
</gene>
<sequence>MMARWCVGWPAAARGGRDELTWQAELTAHAAGEFSMAAAQANAVMEDQAQVMASPGATLVGVYDGHGGPDASRFLRSRLFPLIHEFAAERGGAVDADVIRKAFLAADEEYLQLLRWSLPNMSRAAASGSCCLLGAISGDTLYVANAGDSRAVLGRRAAAGQTVAERLSTEHNVASEEVRRELAALHPDDGEVVVHARGAWRVKGIIQVARAIGDVYLKTPEFKRDPAVQRLCSAAAAVELARPVVTAEPSIHARKLKAGVDLFVVFASDGLWEHLSDEAAVQLVSKSSTRRGVAARLVQAALGEAARKREVRRGDLRRIERGVRRHFHDDITAVVVFLDLDDDGGRRARRRGRVVDSSSSSCSNTPLDVYSLYNSTA</sequence>
<accession>Q7XHN8</accession>
<accession>A0A0P0X1M2</accession>
<accession>A3BFY8</accession>
<evidence type="ECO:0000250" key="1"/>
<evidence type="ECO:0000255" key="2">
    <source>
        <dbReference type="PROSITE-ProRule" id="PRU01082"/>
    </source>
</evidence>
<evidence type="ECO:0000305" key="3"/>
<comment type="catalytic activity">
    <reaction>
        <text>O-phospho-L-seryl-[protein] + H2O = L-seryl-[protein] + phosphate</text>
        <dbReference type="Rhea" id="RHEA:20629"/>
        <dbReference type="Rhea" id="RHEA-COMP:9863"/>
        <dbReference type="Rhea" id="RHEA-COMP:11604"/>
        <dbReference type="ChEBI" id="CHEBI:15377"/>
        <dbReference type="ChEBI" id="CHEBI:29999"/>
        <dbReference type="ChEBI" id="CHEBI:43474"/>
        <dbReference type="ChEBI" id="CHEBI:83421"/>
        <dbReference type="EC" id="3.1.3.16"/>
    </reaction>
</comment>
<comment type="catalytic activity">
    <reaction>
        <text>O-phospho-L-threonyl-[protein] + H2O = L-threonyl-[protein] + phosphate</text>
        <dbReference type="Rhea" id="RHEA:47004"/>
        <dbReference type="Rhea" id="RHEA-COMP:11060"/>
        <dbReference type="Rhea" id="RHEA-COMP:11605"/>
        <dbReference type="ChEBI" id="CHEBI:15377"/>
        <dbReference type="ChEBI" id="CHEBI:30013"/>
        <dbReference type="ChEBI" id="CHEBI:43474"/>
        <dbReference type="ChEBI" id="CHEBI:61977"/>
        <dbReference type="EC" id="3.1.3.16"/>
    </reaction>
</comment>
<comment type="cofactor">
    <cofactor evidence="1">
        <name>Mg(2+)</name>
        <dbReference type="ChEBI" id="CHEBI:18420"/>
    </cofactor>
    <cofactor evidence="1">
        <name>Mn(2+)</name>
        <dbReference type="ChEBI" id="CHEBI:29035"/>
    </cofactor>
    <text evidence="1">Binds 2 magnesium or manganese ions per subunit.</text>
</comment>
<comment type="similarity">
    <text evidence="3">Belongs to the PP2C family.</text>
</comment>
<comment type="sequence caution" evidence="3">
    <conflict type="erroneous initiation">
        <sequence resource="EMBL-CDS" id="EAZ38477"/>
    </conflict>
</comment>
<proteinExistence type="evidence at transcript level"/>
<organism>
    <name type="scientific">Oryza sativa subsp. japonica</name>
    <name type="common">Rice</name>
    <dbReference type="NCBI Taxonomy" id="39947"/>
    <lineage>
        <taxon>Eukaryota</taxon>
        <taxon>Viridiplantae</taxon>
        <taxon>Streptophyta</taxon>
        <taxon>Embryophyta</taxon>
        <taxon>Tracheophyta</taxon>
        <taxon>Spermatophyta</taxon>
        <taxon>Magnoliopsida</taxon>
        <taxon>Liliopsida</taxon>
        <taxon>Poales</taxon>
        <taxon>Poaceae</taxon>
        <taxon>BOP clade</taxon>
        <taxon>Oryzoideae</taxon>
        <taxon>Oryzeae</taxon>
        <taxon>Oryzinae</taxon>
        <taxon>Oryza</taxon>
        <taxon>Oryza sativa</taxon>
    </lineage>
</organism>
<feature type="chain" id="PRO_0000363308" description="Probable protein phosphatase 2C 61">
    <location>
        <begin position="1"/>
        <end position="377"/>
    </location>
</feature>
<feature type="domain" description="PPM-type phosphatase" evidence="2">
    <location>
        <begin position="30"/>
        <end position="338"/>
    </location>
</feature>
<feature type="binding site" evidence="1">
    <location>
        <position position="64"/>
    </location>
    <ligand>
        <name>Mn(2+)</name>
        <dbReference type="ChEBI" id="CHEBI:29035"/>
        <label>1</label>
    </ligand>
</feature>
<feature type="binding site" evidence="1">
    <location>
        <position position="64"/>
    </location>
    <ligand>
        <name>Mn(2+)</name>
        <dbReference type="ChEBI" id="CHEBI:29035"/>
        <label>2</label>
    </ligand>
</feature>
<feature type="binding site" evidence="1">
    <location>
        <position position="65"/>
    </location>
    <ligand>
        <name>Mn(2+)</name>
        <dbReference type="ChEBI" id="CHEBI:29035"/>
        <label>1</label>
    </ligand>
</feature>
<feature type="binding site" evidence="1">
    <location>
        <position position="269"/>
    </location>
    <ligand>
        <name>Mn(2+)</name>
        <dbReference type="ChEBI" id="CHEBI:29035"/>
        <label>2</label>
    </ligand>
</feature>
<feature type="binding site" evidence="1">
    <location>
        <position position="329"/>
    </location>
    <ligand>
        <name>Mn(2+)</name>
        <dbReference type="ChEBI" id="CHEBI:29035"/>
        <label>2</label>
    </ligand>
</feature>
<protein>
    <recommendedName>
        <fullName>Probable protein phosphatase 2C 61</fullName>
        <shortName>OsPP2C61</shortName>
        <ecNumber>3.1.3.16</ecNumber>
    </recommendedName>
</protein>
<reference key="1">
    <citation type="journal article" date="2005" name="Nature">
        <title>The map-based sequence of the rice genome.</title>
        <authorList>
            <consortium name="International rice genome sequencing project (IRGSP)"/>
        </authorList>
    </citation>
    <scope>NUCLEOTIDE SEQUENCE [LARGE SCALE GENOMIC DNA]</scope>
    <source>
        <strain>cv. Nipponbare</strain>
    </source>
</reference>
<reference key="2">
    <citation type="journal article" date="2008" name="Nucleic Acids Res.">
        <title>The rice annotation project database (RAP-DB): 2008 update.</title>
        <authorList>
            <consortium name="The rice annotation project (RAP)"/>
        </authorList>
    </citation>
    <scope>GENOME REANNOTATION</scope>
    <source>
        <strain>cv. Nipponbare</strain>
    </source>
</reference>
<reference key="3">
    <citation type="journal article" date="2013" name="Rice">
        <title>Improvement of the Oryza sativa Nipponbare reference genome using next generation sequence and optical map data.</title>
        <authorList>
            <person name="Kawahara Y."/>
            <person name="de la Bastide M."/>
            <person name="Hamilton J.P."/>
            <person name="Kanamori H."/>
            <person name="McCombie W.R."/>
            <person name="Ouyang S."/>
            <person name="Schwartz D.C."/>
            <person name="Tanaka T."/>
            <person name="Wu J."/>
            <person name="Zhou S."/>
            <person name="Childs K.L."/>
            <person name="Davidson R.M."/>
            <person name="Lin H."/>
            <person name="Quesada-Ocampo L."/>
            <person name="Vaillancourt B."/>
            <person name="Sakai H."/>
            <person name="Lee S.S."/>
            <person name="Kim J."/>
            <person name="Numa H."/>
            <person name="Itoh T."/>
            <person name="Buell C.R."/>
            <person name="Matsumoto T."/>
        </authorList>
    </citation>
    <scope>GENOME REANNOTATION</scope>
    <source>
        <strain>cv. Nipponbare</strain>
    </source>
</reference>
<reference key="4">
    <citation type="journal article" date="2005" name="PLoS Biol.">
        <title>The genomes of Oryza sativa: a history of duplications.</title>
        <authorList>
            <person name="Yu J."/>
            <person name="Wang J."/>
            <person name="Lin W."/>
            <person name="Li S."/>
            <person name="Li H."/>
            <person name="Zhou J."/>
            <person name="Ni P."/>
            <person name="Dong W."/>
            <person name="Hu S."/>
            <person name="Zeng C."/>
            <person name="Zhang J."/>
            <person name="Zhang Y."/>
            <person name="Li R."/>
            <person name="Xu Z."/>
            <person name="Li S."/>
            <person name="Li X."/>
            <person name="Zheng H."/>
            <person name="Cong L."/>
            <person name="Lin L."/>
            <person name="Yin J."/>
            <person name="Geng J."/>
            <person name="Li G."/>
            <person name="Shi J."/>
            <person name="Liu J."/>
            <person name="Lv H."/>
            <person name="Li J."/>
            <person name="Wang J."/>
            <person name="Deng Y."/>
            <person name="Ran L."/>
            <person name="Shi X."/>
            <person name="Wang X."/>
            <person name="Wu Q."/>
            <person name="Li C."/>
            <person name="Ren X."/>
            <person name="Wang J."/>
            <person name="Wang X."/>
            <person name="Li D."/>
            <person name="Liu D."/>
            <person name="Zhang X."/>
            <person name="Ji Z."/>
            <person name="Zhao W."/>
            <person name="Sun Y."/>
            <person name="Zhang Z."/>
            <person name="Bao J."/>
            <person name="Han Y."/>
            <person name="Dong L."/>
            <person name="Ji J."/>
            <person name="Chen P."/>
            <person name="Wu S."/>
            <person name="Liu J."/>
            <person name="Xiao Y."/>
            <person name="Bu D."/>
            <person name="Tan J."/>
            <person name="Yang L."/>
            <person name="Ye C."/>
            <person name="Zhang J."/>
            <person name="Xu J."/>
            <person name="Zhou Y."/>
            <person name="Yu Y."/>
            <person name="Zhang B."/>
            <person name="Zhuang S."/>
            <person name="Wei H."/>
            <person name="Liu B."/>
            <person name="Lei M."/>
            <person name="Yu H."/>
            <person name="Li Y."/>
            <person name="Xu H."/>
            <person name="Wei S."/>
            <person name="He X."/>
            <person name="Fang L."/>
            <person name="Zhang Z."/>
            <person name="Zhang Y."/>
            <person name="Huang X."/>
            <person name="Su Z."/>
            <person name="Tong W."/>
            <person name="Li J."/>
            <person name="Tong Z."/>
            <person name="Li S."/>
            <person name="Ye J."/>
            <person name="Wang L."/>
            <person name="Fang L."/>
            <person name="Lei T."/>
            <person name="Chen C.-S."/>
            <person name="Chen H.-C."/>
            <person name="Xu Z."/>
            <person name="Li H."/>
            <person name="Huang H."/>
            <person name="Zhang F."/>
            <person name="Xu H."/>
            <person name="Li N."/>
            <person name="Zhao C."/>
            <person name="Li S."/>
            <person name="Dong L."/>
            <person name="Huang Y."/>
            <person name="Li L."/>
            <person name="Xi Y."/>
            <person name="Qi Q."/>
            <person name="Li W."/>
            <person name="Zhang B."/>
            <person name="Hu W."/>
            <person name="Zhang Y."/>
            <person name="Tian X."/>
            <person name="Jiao Y."/>
            <person name="Liang X."/>
            <person name="Jin J."/>
            <person name="Gao L."/>
            <person name="Zheng W."/>
            <person name="Hao B."/>
            <person name="Liu S.-M."/>
            <person name="Wang W."/>
            <person name="Yuan L."/>
            <person name="Cao M."/>
            <person name="McDermott J."/>
            <person name="Samudrala R."/>
            <person name="Wang J."/>
            <person name="Wong G.K.-S."/>
            <person name="Yang H."/>
        </authorList>
    </citation>
    <scope>NUCLEOTIDE SEQUENCE [LARGE SCALE GENOMIC DNA]</scope>
    <source>
        <strain>cv. Nipponbare</strain>
    </source>
</reference>
<reference key="5">
    <citation type="journal article" date="2003" name="Science">
        <title>Collection, mapping, and annotation of over 28,000 cDNA clones from japonica rice.</title>
        <authorList>
            <consortium name="The rice full-length cDNA consortium"/>
        </authorList>
    </citation>
    <scope>NUCLEOTIDE SEQUENCE [LARGE SCALE MRNA]</scope>
    <source>
        <strain>cv. Nipponbare</strain>
    </source>
</reference>
<reference key="6">
    <citation type="journal article" date="2008" name="BMC Genomics">
        <title>Genome-wide and expression analysis of protein phosphatase 2C in rice and Arabidopsis.</title>
        <authorList>
            <person name="Xue T."/>
            <person name="Wang D."/>
            <person name="Zhang S."/>
            <person name="Ehlting J."/>
            <person name="Ni F."/>
            <person name="Jacab S."/>
            <person name="Zheng C."/>
            <person name="Zhong Y."/>
        </authorList>
    </citation>
    <scope>GENE FAMILY</scope>
    <scope>NOMENCLATURE</scope>
</reference>